<protein>
    <recommendedName>
        <fullName evidence="1">Ribosomal RNA large subunit methyltransferase K/L</fullName>
    </recommendedName>
    <domain>
        <recommendedName>
            <fullName evidence="1">23S rRNA m2G2445 methyltransferase</fullName>
            <ecNumber evidence="1">2.1.1.173</ecNumber>
        </recommendedName>
        <alternativeName>
            <fullName evidence="1">rRNA (guanine-N(2)-)-methyltransferase RlmL</fullName>
        </alternativeName>
    </domain>
    <domain>
        <recommendedName>
            <fullName evidence="1">23S rRNA m7G2069 methyltransferase</fullName>
            <ecNumber evidence="1">2.1.1.264</ecNumber>
        </recommendedName>
        <alternativeName>
            <fullName evidence="1">rRNA (guanine-N(7)-)-methyltransferase RlmK</fullName>
        </alternativeName>
    </domain>
</protein>
<keyword id="KW-0963">Cytoplasm</keyword>
<keyword id="KW-0489">Methyltransferase</keyword>
<keyword id="KW-1185">Reference proteome</keyword>
<keyword id="KW-0694">RNA-binding</keyword>
<keyword id="KW-0698">rRNA processing</keyword>
<keyword id="KW-0949">S-adenosyl-L-methionine</keyword>
<keyword id="KW-0808">Transferase</keyword>
<sequence>MIHQYFAACPKGLEGLLLQELQALGATDTRETIAGVYFNGDLNLAYRTCLWSRLANKILLPLANFEVNSQEDLYEGVRMLPWQDHLSPSGSLLVDFVGTNDAIRNTQFGALKVKDAIVDCLRDFSGVRPNIAKRDPDLLVNARLSKNKLVLSIDLSGESLHRRGYRLKQGSAPLKENLAAGILIRAGWPEVAAQGGALLDPMCGSGTFLVEAALMAADIAPGLGRASFGFERWLNHRNDLWLTLREEAHHRRKLGLAKVNLPEIRGYDADVRVVRAAEENIISAELDHWLRVSRKELAEFKKPTHRAMDYGLVLSNPPYGERLGEIESLKLLYAHLGERLRNEFPGWRAGVFTGNPELGKQMGLRADKKYKFFNGTIASELLMFSINTDVFVQSRVEQDGRFSKDEVERDAAEQKVKAAAKEEQAAALSNGAQMLVNRLQKNRKQLEKWARKNEVSCYRLYDADMPEYAAAIDLYLGQTPPNRAPQLYAHVQEYAAPKSVDEARAAQRFADIEAAVPYALDIPVSHISYKQRRRNKGSSQYEKLNERPTGDLFSVQEGQAKLHINLWQYLDTGLFLDHRPVRHMIANMARDKRFLNLFCYTATASVHAAMGGARYTVSVDMSNTYLNWARKNFALNGLSEARNRLEQADCLKWLENNDQQFDLILLDPPSFSNSKRMEDILDIQRDHVEMIHNAMRSLSEEGTLIFSNNLRNFKLDLEALGAYNIEDISARTIDEDFKRNPKIHQCWLIRH</sequence>
<feature type="chain" id="PRO_0000366728" description="Ribosomal RNA large subunit methyltransferase K/L">
    <location>
        <begin position="1"/>
        <end position="751"/>
    </location>
</feature>
<feature type="domain" description="THUMP" evidence="1">
    <location>
        <begin position="44"/>
        <end position="155"/>
    </location>
</feature>
<dbReference type="EC" id="2.1.1.173" evidence="1"/>
<dbReference type="EC" id="2.1.1.264" evidence="1"/>
<dbReference type="EMBL" id="CP000934">
    <property type="protein sequence ID" value="ACE83336.1"/>
    <property type="molecule type" value="Genomic_DNA"/>
</dbReference>
<dbReference type="RefSeq" id="WP_012487758.1">
    <property type="nucleotide sequence ID" value="NC_010995.1"/>
</dbReference>
<dbReference type="SMR" id="B3PIL6"/>
<dbReference type="STRING" id="498211.CJA_2156"/>
<dbReference type="KEGG" id="cja:CJA_2156"/>
<dbReference type="eggNOG" id="COG0116">
    <property type="taxonomic scope" value="Bacteria"/>
</dbReference>
<dbReference type="eggNOG" id="COG1092">
    <property type="taxonomic scope" value="Bacteria"/>
</dbReference>
<dbReference type="HOGENOM" id="CLU_014042_2_0_6"/>
<dbReference type="OrthoDB" id="9809404at2"/>
<dbReference type="Proteomes" id="UP000001036">
    <property type="component" value="Chromosome"/>
</dbReference>
<dbReference type="GO" id="GO:0005737">
    <property type="term" value="C:cytoplasm"/>
    <property type="evidence" value="ECO:0007669"/>
    <property type="project" value="UniProtKB-SubCell"/>
</dbReference>
<dbReference type="GO" id="GO:0052915">
    <property type="term" value="F:23S rRNA (guanine(2445)-N(2))-methyltransferase activity"/>
    <property type="evidence" value="ECO:0007669"/>
    <property type="project" value="UniProtKB-UniRule"/>
</dbReference>
<dbReference type="GO" id="GO:0003723">
    <property type="term" value="F:RNA binding"/>
    <property type="evidence" value="ECO:0007669"/>
    <property type="project" value="UniProtKB-KW"/>
</dbReference>
<dbReference type="GO" id="GO:0070043">
    <property type="term" value="F:rRNA (guanine-N7-)-methyltransferase activity"/>
    <property type="evidence" value="ECO:0007669"/>
    <property type="project" value="UniProtKB-UniRule"/>
</dbReference>
<dbReference type="CDD" id="cd02440">
    <property type="entry name" value="AdoMet_MTases"/>
    <property type="match status" value="1"/>
</dbReference>
<dbReference type="CDD" id="cd11715">
    <property type="entry name" value="THUMP_AdoMetMT"/>
    <property type="match status" value="1"/>
</dbReference>
<dbReference type="Gene3D" id="3.30.2130.30">
    <property type="match status" value="1"/>
</dbReference>
<dbReference type="Gene3D" id="3.30.750.80">
    <property type="entry name" value="RNA methyltransferase domain (HRMD) like"/>
    <property type="match status" value="1"/>
</dbReference>
<dbReference type="Gene3D" id="3.40.50.150">
    <property type="entry name" value="Vaccinia Virus protein VP39"/>
    <property type="match status" value="2"/>
</dbReference>
<dbReference type="HAMAP" id="MF_01858">
    <property type="entry name" value="23SrRNA_methyltr_KL"/>
    <property type="match status" value="1"/>
</dbReference>
<dbReference type="InterPro" id="IPR017244">
    <property type="entry name" value="23SrRNA_methyltr_KL"/>
</dbReference>
<dbReference type="InterPro" id="IPR002052">
    <property type="entry name" value="DNA_methylase_N6_adenine_CS"/>
</dbReference>
<dbReference type="InterPro" id="IPR000241">
    <property type="entry name" value="RlmKL-like_Mtase"/>
</dbReference>
<dbReference type="InterPro" id="IPR054170">
    <property type="entry name" value="RlmL_1st"/>
</dbReference>
<dbReference type="InterPro" id="IPR019614">
    <property type="entry name" value="SAM-dep_methyl-trfase"/>
</dbReference>
<dbReference type="InterPro" id="IPR029063">
    <property type="entry name" value="SAM-dependent_MTases_sf"/>
</dbReference>
<dbReference type="InterPro" id="IPR004114">
    <property type="entry name" value="THUMP_dom"/>
</dbReference>
<dbReference type="NCBIfam" id="NF008748">
    <property type="entry name" value="PRK11783.1"/>
    <property type="match status" value="1"/>
</dbReference>
<dbReference type="PANTHER" id="PTHR47313">
    <property type="entry name" value="RIBOSOMAL RNA LARGE SUBUNIT METHYLTRANSFERASE K/L"/>
    <property type="match status" value="1"/>
</dbReference>
<dbReference type="PANTHER" id="PTHR47313:SF1">
    <property type="entry name" value="RIBOSOMAL RNA LARGE SUBUNIT METHYLTRANSFERASE K_L"/>
    <property type="match status" value="1"/>
</dbReference>
<dbReference type="Pfam" id="PF10672">
    <property type="entry name" value="Methyltrans_SAM"/>
    <property type="match status" value="1"/>
</dbReference>
<dbReference type="Pfam" id="PF22020">
    <property type="entry name" value="RlmL_1st"/>
    <property type="match status" value="1"/>
</dbReference>
<dbReference type="Pfam" id="PF02926">
    <property type="entry name" value="THUMP"/>
    <property type="match status" value="1"/>
</dbReference>
<dbReference type="Pfam" id="PF01170">
    <property type="entry name" value="UPF0020"/>
    <property type="match status" value="1"/>
</dbReference>
<dbReference type="PIRSF" id="PIRSF037618">
    <property type="entry name" value="RNA_Mtase_bacteria_prd"/>
    <property type="match status" value="1"/>
</dbReference>
<dbReference type="PRINTS" id="PR00507">
    <property type="entry name" value="N12N6MTFRASE"/>
</dbReference>
<dbReference type="SMART" id="SM00981">
    <property type="entry name" value="THUMP"/>
    <property type="match status" value="1"/>
</dbReference>
<dbReference type="SUPFAM" id="SSF53335">
    <property type="entry name" value="S-adenosyl-L-methionine-dependent methyltransferases"/>
    <property type="match status" value="2"/>
</dbReference>
<dbReference type="PROSITE" id="PS51165">
    <property type="entry name" value="THUMP"/>
    <property type="match status" value="1"/>
</dbReference>
<comment type="function">
    <text evidence="1">Specifically methylates the guanine in position 2445 (m2G2445) and the guanine in position 2069 (m7G2069) of 23S rRNA.</text>
</comment>
<comment type="catalytic activity">
    <reaction evidence="1">
        <text>guanosine(2445) in 23S rRNA + S-adenosyl-L-methionine = N(2)-methylguanosine(2445) in 23S rRNA + S-adenosyl-L-homocysteine + H(+)</text>
        <dbReference type="Rhea" id="RHEA:42740"/>
        <dbReference type="Rhea" id="RHEA-COMP:10215"/>
        <dbReference type="Rhea" id="RHEA-COMP:10216"/>
        <dbReference type="ChEBI" id="CHEBI:15378"/>
        <dbReference type="ChEBI" id="CHEBI:57856"/>
        <dbReference type="ChEBI" id="CHEBI:59789"/>
        <dbReference type="ChEBI" id="CHEBI:74269"/>
        <dbReference type="ChEBI" id="CHEBI:74481"/>
        <dbReference type="EC" id="2.1.1.173"/>
    </reaction>
</comment>
<comment type="catalytic activity">
    <reaction evidence="1">
        <text>guanosine(2069) in 23S rRNA + S-adenosyl-L-methionine = N(2)-methylguanosine(2069) in 23S rRNA + S-adenosyl-L-homocysteine + H(+)</text>
        <dbReference type="Rhea" id="RHEA:43772"/>
        <dbReference type="Rhea" id="RHEA-COMP:10688"/>
        <dbReference type="Rhea" id="RHEA-COMP:10689"/>
        <dbReference type="ChEBI" id="CHEBI:15378"/>
        <dbReference type="ChEBI" id="CHEBI:57856"/>
        <dbReference type="ChEBI" id="CHEBI:59789"/>
        <dbReference type="ChEBI" id="CHEBI:74269"/>
        <dbReference type="ChEBI" id="CHEBI:74481"/>
        <dbReference type="EC" id="2.1.1.264"/>
    </reaction>
</comment>
<comment type="subcellular location">
    <subcellularLocation>
        <location evidence="1">Cytoplasm</location>
    </subcellularLocation>
</comment>
<comment type="similarity">
    <text evidence="1">Belongs to the methyltransferase superfamily. RlmKL family.</text>
</comment>
<gene>
    <name evidence="1" type="primary">rlmL</name>
    <name type="ordered locus">CJA_2156</name>
</gene>
<name>RLMKL_CELJU</name>
<reference key="1">
    <citation type="journal article" date="2008" name="J. Bacteriol.">
        <title>Insights into plant cell wall degradation from the genome sequence of the soil bacterium Cellvibrio japonicus.</title>
        <authorList>
            <person name="DeBoy R.T."/>
            <person name="Mongodin E.F."/>
            <person name="Fouts D.E."/>
            <person name="Tailford L.E."/>
            <person name="Khouri H."/>
            <person name="Emerson J.B."/>
            <person name="Mohamoud Y."/>
            <person name="Watkins K."/>
            <person name="Henrissat B."/>
            <person name="Gilbert H.J."/>
            <person name="Nelson K.E."/>
        </authorList>
    </citation>
    <scope>NUCLEOTIDE SEQUENCE [LARGE SCALE GENOMIC DNA]</scope>
    <source>
        <strain>Ueda107</strain>
    </source>
</reference>
<proteinExistence type="inferred from homology"/>
<organism>
    <name type="scientific">Cellvibrio japonicus (strain Ueda107)</name>
    <name type="common">Pseudomonas fluorescens subsp. cellulosa</name>
    <dbReference type="NCBI Taxonomy" id="498211"/>
    <lineage>
        <taxon>Bacteria</taxon>
        <taxon>Pseudomonadati</taxon>
        <taxon>Pseudomonadota</taxon>
        <taxon>Gammaproteobacteria</taxon>
        <taxon>Cellvibrionales</taxon>
        <taxon>Cellvibrionaceae</taxon>
        <taxon>Cellvibrio</taxon>
    </lineage>
</organism>
<evidence type="ECO:0000255" key="1">
    <source>
        <dbReference type="HAMAP-Rule" id="MF_01858"/>
    </source>
</evidence>
<accession>B3PIL6</accession>